<keyword id="KW-0002">3D-structure</keyword>
<keyword id="KW-0460">Magnesium</keyword>
<keyword id="KW-0479">Metal-binding</keyword>
<keyword id="KW-1185">Reference proteome</keyword>
<keyword id="KW-0694">RNA-binding</keyword>
<reference key="1">
    <citation type="journal article" date="1996" name="Science">
        <title>Complete genome sequence of the methanogenic archaeon, Methanococcus jannaschii.</title>
        <authorList>
            <person name="Bult C.J."/>
            <person name="White O."/>
            <person name="Olsen G.J."/>
            <person name="Zhou L."/>
            <person name="Fleischmann R.D."/>
            <person name="Sutton G.G."/>
            <person name="Blake J.A."/>
            <person name="FitzGerald L.M."/>
            <person name="Clayton R.A."/>
            <person name="Gocayne J.D."/>
            <person name="Kerlavage A.R."/>
            <person name="Dougherty B.A."/>
            <person name="Tomb J.-F."/>
            <person name="Adams M.D."/>
            <person name="Reich C.I."/>
            <person name="Overbeek R."/>
            <person name="Kirkness E.F."/>
            <person name="Weinstock K.G."/>
            <person name="Merrick J.M."/>
            <person name="Glodek A."/>
            <person name="Scott J.L."/>
            <person name="Geoghagen N.S.M."/>
            <person name="Weidman J.F."/>
            <person name="Fuhrmann J.L."/>
            <person name="Nguyen D."/>
            <person name="Utterback T.R."/>
            <person name="Kelley J.M."/>
            <person name="Peterson J.D."/>
            <person name="Sadow P.W."/>
            <person name="Hanna M.C."/>
            <person name="Cotton M.D."/>
            <person name="Roberts K.M."/>
            <person name="Hurst M.A."/>
            <person name="Kaine B.P."/>
            <person name="Borodovsky M."/>
            <person name="Klenk H.-P."/>
            <person name="Fraser C.M."/>
            <person name="Smith H.O."/>
            <person name="Woese C.R."/>
            <person name="Venter J.C."/>
        </authorList>
    </citation>
    <scope>NUCLEOTIDE SEQUENCE [LARGE SCALE GENOMIC DNA]</scope>
    <source>
        <strain>ATCC 43067 / DSM 2661 / JAL-1 / JCM 10045 / NBRC 100440</strain>
    </source>
</reference>
<reference key="2">
    <citation type="submission" date="2009-07" db="PDB data bank">
        <title>A domain of a functionally unknown protein from Methanocaldococcus jannaschii DSM 2661.</title>
        <authorList>
            <consortium name="Midwest center for structural genomics (MCSG)"/>
        </authorList>
    </citation>
    <scope>X-RAY CRYSTALLOGRAPHY (2.64 ANGSTROMS) OF 27-165</scope>
</reference>
<dbReference type="EMBL" id="L77117">
    <property type="protein sequence ID" value="AAB99554.1"/>
    <property type="molecule type" value="Genomic_DNA"/>
</dbReference>
<dbReference type="PIR" id="D64491">
    <property type="entry name" value="D64491"/>
</dbReference>
<dbReference type="PDB" id="3I8O">
    <property type="method" value="X-ray"/>
    <property type="resolution" value="2.64 A"/>
    <property type="chains" value="A=27-165"/>
</dbReference>
<dbReference type="PDBsum" id="3I8O"/>
<dbReference type="SMR" id="Q58928"/>
<dbReference type="FunCoup" id="Q58928">
    <property type="interactions" value="2"/>
</dbReference>
<dbReference type="STRING" id="243232.MJ_1533"/>
<dbReference type="PaxDb" id="243232-MJ_1533"/>
<dbReference type="DNASU" id="1452441"/>
<dbReference type="EnsemblBacteria" id="AAB99554">
    <property type="protein sequence ID" value="AAB99554"/>
    <property type="gene ID" value="MJ_1533"/>
</dbReference>
<dbReference type="KEGG" id="mja:MJ_1533"/>
<dbReference type="eggNOG" id="arCOG04116">
    <property type="taxonomic scope" value="Archaea"/>
</dbReference>
<dbReference type="HOGENOM" id="CLU_023387_0_0_2"/>
<dbReference type="InParanoid" id="Q58928"/>
<dbReference type="PhylomeDB" id="Q58928"/>
<dbReference type="EvolutionaryTrace" id="Q58928"/>
<dbReference type="Proteomes" id="UP000000805">
    <property type="component" value="Chromosome"/>
</dbReference>
<dbReference type="GO" id="GO:0046872">
    <property type="term" value="F:metal ion binding"/>
    <property type="evidence" value="ECO:0007669"/>
    <property type="project" value="UniProtKB-KW"/>
</dbReference>
<dbReference type="GO" id="GO:0003723">
    <property type="term" value="F:RNA binding"/>
    <property type="evidence" value="ECO:0007669"/>
    <property type="project" value="UniProtKB-KW"/>
</dbReference>
<dbReference type="CDD" id="cd09878">
    <property type="entry name" value="PIN_VapC_VirB11L-ATPase-like"/>
    <property type="match status" value="1"/>
</dbReference>
<dbReference type="Gene3D" id="3.40.50.1010">
    <property type="entry name" value="5'-nuclease"/>
    <property type="match status" value="1"/>
</dbReference>
<dbReference type="Gene3D" id="3.30.1370.10">
    <property type="entry name" value="K Homology domain, type 1"/>
    <property type="match status" value="1"/>
</dbReference>
<dbReference type="Gene3D" id="3.40.50.300">
    <property type="entry name" value="P-loop containing nucleotide triphosphate hydrolases"/>
    <property type="match status" value="1"/>
</dbReference>
<dbReference type="InterPro" id="IPR004087">
    <property type="entry name" value="KH_dom"/>
</dbReference>
<dbReference type="InterPro" id="IPR004088">
    <property type="entry name" value="KH_dom_type_1"/>
</dbReference>
<dbReference type="InterPro" id="IPR036612">
    <property type="entry name" value="KH_dom_type_1_sf"/>
</dbReference>
<dbReference type="InterPro" id="IPR009019">
    <property type="entry name" value="KH_sf_prok-type"/>
</dbReference>
<dbReference type="InterPro" id="IPR052041">
    <property type="entry name" value="Nucleic_acid_metab_PIN/TRAM"/>
</dbReference>
<dbReference type="InterPro" id="IPR027417">
    <property type="entry name" value="P-loop_NTPase"/>
</dbReference>
<dbReference type="InterPro" id="IPR029060">
    <property type="entry name" value="PIN-like_dom_sf"/>
</dbReference>
<dbReference type="InterPro" id="IPR002716">
    <property type="entry name" value="PIN_dom"/>
</dbReference>
<dbReference type="InterPro" id="IPR001482">
    <property type="entry name" value="T2SS/T4SS_dom"/>
</dbReference>
<dbReference type="NCBIfam" id="NF010335">
    <property type="entry name" value="PRK13764.1"/>
    <property type="match status" value="1"/>
</dbReference>
<dbReference type="PANTHER" id="PTHR11603">
    <property type="entry name" value="AAA FAMILY ATPASE"/>
    <property type="match status" value="1"/>
</dbReference>
<dbReference type="PANTHER" id="PTHR11603:SF147">
    <property type="entry name" value="MEMBRANE PROTEIN"/>
    <property type="match status" value="1"/>
</dbReference>
<dbReference type="Pfam" id="PF00013">
    <property type="entry name" value="KH_1"/>
    <property type="match status" value="1"/>
</dbReference>
<dbReference type="Pfam" id="PF01850">
    <property type="entry name" value="PIN"/>
    <property type="match status" value="1"/>
</dbReference>
<dbReference type="Pfam" id="PF00437">
    <property type="entry name" value="T2SSE"/>
    <property type="match status" value="1"/>
</dbReference>
<dbReference type="SMART" id="SM00322">
    <property type="entry name" value="KH"/>
    <property type="match status" value="1"/>
</dbReference>
<dbReference type="SMART" id="SM00670">
    <property type="entry name" value="PINc"/>
    <property type="match status" value="1"/>
</dbReference>
<dbReference type="SUPFAM" id="SSF52540">
    <property type="entry name" value="P-loop containing nucleoside triphosphate hydrolases"/>
    <property type="match status" value="1"/>
</dbReference>
<dbReference type="SUPFAM" id="SSF88723">
    <property type="entry name" value="PIN domain-like"/>
    <property type="match status" value="1"/>
</dbReference>
<dbReference type="SUPFAM" id="SSF54814">
    <property type="entry name" value="Prokaryotic type KH domain (KH-domain type II)"/>
    <property type="match status" value="1"/>
</dbReference>
<dbReference type="PROSITE" id="PS50084">
    <property type="entry name" value="KH_TYPE_1"/>
    <property type="match status" value="1"/>
</dbReference>
<accession>Q58928</accession>
<organism>
    <name type="scientific">Methanocaldococcus jannaschii (strain ATCC 43067 / DSM 2661 / JAL-1 / JCM 10045 / NBRC 100440)</name>
    <name type="common">Methanococcus jannaschii</name>
    <dbReference type="NCBI Taxonomy" id="243232"/>
    <lineage>
        <taxon>Archaea</taxon>
        <taxon>Methanobacteriati</taxon>
        <taxon>Methanobacteriota</taxon>
        <taxon>Methanomada group</taxon>
        <taxon>Methanococci</taxon>
        <taxon>Methanococcales</taxon>
        <taxon>Methanocaldococcaceae</taxon>
        <taxon>Methanocaldococcus</taxon>
    </lineage>
</organism>
<gene>
    <name type="ordered locus">MJ1533</name>
</gene>
<feature type="chain" id="PRO_0000050166" description="Uncharacterized KH and PIN-domain containing protein MJ1533">
    <location>
        <begin position="1"/>
        <end position="642"/>
    </location>
</feature>
<feature type="domain" description="PINc">
    <location>
        <begin position="29"/>
        <end position="149"/>
    </location>
</feature>
<feature type="domain" description="KH" evidence="2">
    <location>
        <begin position="510"/>
        <end position="578"/>
    </location>
</feature>
<feature type="binding site" evidence="1">
    <location>
        <position position="15"/>
    </location>
    <ligand>
        <name>Mg(2+)</name>
        <dbReference type="ChEBI" id="CHEBI:18420"/>
    </ligand>
</feature>
<feature type="binding site" evidence="1">
    <location>
        <position position="118"/>
    </location>
    <ligand>
        <name>Mg(2+)</name>
        <dbReference type="ChEBI" id="CHEBI:18420"/>
    </ligand>
</feature>
<feature type="strand" evidence="4">
    <location>
        <begin position="28"/>
        <end position="31"/>
    </location>
</feature>
<feature type="helix" evidence="4">
    <location>
        <begin position="33"/>
        <end position="37"/>
    </location>
</feature>
<feature type="helix" evidence="4">
    <location>
        <begin position="40"/>
        <end position="46"/>
    </location>
</feature>
<feature type="turn" evidence="4">
    <location>
        <begin position="47"/>
        <end position="52"/>
    </location>
</feature>
<feature type="strand" evidence="4">
    <location>
        <begin position="54"/>
        <end position="58"/>
    </location>
</feature>
<feature type="helix" evidence="4">
    <location>
        <begin position="59"/>
        <end position="69"/>
    </location>
</feature>
<feature type="turn" evidence="4">
    <location>
        <begin position="70"/>
        <end position="72"/>
    </location>
</feature>
<feature type="helix" evidence="4">
    <location>
        <begin position="74"/>
        <end position="92"/>
    </location>
</feature>
<feature type="strand" evidence="4">
    <location>
        <begin position="97"/>
        <end position="101"/>
    </location>
</feature>
<feature type="helix" evidence="4">
    <location>
        <begin position="106"/>
        <end position="110"/>
    </location>
</feature>
<feature type="strand" evidence="4">
    <location>
        <begin position="114"/>
        <end position="116"/>
    </location>
</feature>
<feature type="helix" evidence="4">
    <location>
        <begin position="117"/>
        <end position="127"/>
    </location>
</feature>
<feature type="strand" evidence="4">
    <location>
        <begin position="131"/>
        <end position="135"/>
    </location>
</feature>
<feature type="helix" evidence="4">
    <location>
        <begin position="137"/>
        <end position="145"/>
    </location>
</feature>
<feature type="strand" evidence="4">
    <location>
        <begin position="150"/>
        <end position="152"/>
    </location>
</feature>
<sequence length="642" mass="72907">MKVTFMNLEERKKLETKSIDELDLIGKKVCVDTCVVIDGRITELIERGKLKDATIIIPEAVVSELEYQANMGREIGYKGIEELRKLIEKASEHNIKVEYYGERPTREEIFLAKSGEIDAMIRKVAKETNSILLTSDWIQYNLAKAQGIEAYFLEAAEEEVELVLDKYFDEETMSVHLKEGCLPYAKKGKPGEVKLVPIGDKELTKEEMEDIIDNIIKYAEQNNGFFEIQRKGATVIQLGNIRISIARPPFSEALEVTAVRPVVKASLEDYELSDKLMERLKERAEGIFVSGPPGSGKSTFVAALAEFYRSQGKIVKTMESPRDLQVSKEITQYAPLEGDMEKTCDILLLVRPDYTIYDEVRKTRDFEIFADMRMAGVGMVGVVHASKPIDAIQRLIGRVELGVIPQVVDTVIFIKDGKIQKVYEIDFTVKVPYGMVEEDLARPVIEVKDFETGRVEYEIYTYGEQVVVMPIKEEGGKKAPIYGYAEEKLEEILKKLLPRKAKPMVKVTGDNSIDLIVPEKYIGAIIGKGGKEISKLEDMLGLKISVKEKEKEEEKDMERIYRKYEYVNELESTRIYETDKYVVVDVGEDFAGENIRIYIDGKLLTTVTVRNDGTVRINKKTKVGKEILEAIDEGRDIYVDLQ</sequence>
<name>Y1533_METJA</name>
<proteinExistence type="evidence at protein level"/>
<comment type="cofactor">
    <cofactor evidence="3">
        <name>Mg(2+)</name>
        <dbReference type="ChEBI" id="CHEBI:18420"/>
    </cofactor>
</comment>
<comment type="similarity">
    <text evidence="3">In the N-terminal section; belongs to the PINc/VapC protein family.</text>
</comment>
<evidence type="ECO:0000255" key="1"/>
<evidence type="ECO:0000255" key="2">
    <source>
        <dbReference type="PROSITE-ProRule" id="PRU00117"/>
    </source>
</evidence>
<evidence type="ECO:0000305" key="3"/>
<evidence type="ECO:0007829" key="4">
    <source>
        <dbReference type="PDB" id="3I8O"/>
    </source>
</evidence>
<protein>
    <recommendedName>
        <fullName>Uncharacterized KH and PIN-domain containing protein MJ1533</fullName>
    </recommendedName>
</protein>